<reference key="1">
    <citation type="journal article" date="2011" name="Stand. Genomic Sci.">
        <title>Complete genome sequence of Parvibaculum lavamentivorans type strain (DS-1(T)).</title>
        <authorList>
            <person name="Schleheck D."/>
            <person name="Weiss M."/>
            <person name="Pitluck S."/>
            <person name="Bruce D."/>
            <person name="Land M.L."/>
            <person name="Han S."/>
            <person name="Saunders E."/>
            <person name="Tapia R."/>
            <person name="Detter C."/>
            <person name="Brettin T."/>
            <person name="Han J."/>
            <person name="Woyke T."/>
            <person name="Goodwin L."/>
            <person name="Pennacchio L."/>
            <person name="Nolan M."/>
            <person name="Cook A.M."/>
            <person name="Kjelleberg S."/>
            <person name="Thomas T."/>
        </authorList>
    </citation>
    <scope>NUCLEOTIDE SEQUENCE [LARGE SCALE GENOMIC DNA]</scope>
    <source>
        <strain>DS-1 / DSM 13023 / NCIMB 13966</strain>
    </source>
</reference>
<proteinExistence type="inferred from homology"/>
<organism>
    <name type="scientific">Parvibaculum lavamentivorans (strain DS-1 / DSM 13023 / NCIMB 13966)</name>
    <dbReference type="NCBI Taxonomy" id="402881"/>
    <lineage>
        <taxon>Bacteria</taxon>
        <taxon>Pseudomonadati</taxon>
        <taxon>Pseudomonadota</taxon>
        <taxon>Alphaproteobacteria</taxon>
        <taxon>Hyphomicrobiales</taxon>
        <taxon>Parvibaculaceae</taxon>
        <taxon>Parvibaculum</taxon>
    </lineage>
</organism>
<keyword id="KW-0067">ATP-binding</keyword>
<keyword id="KW-0460">Magnesium</keyword>
<keyword id="KW-0547">Nucleotide-binding</keyword>
<keyword id="KW-1185">Reference proteome</keyword>
<keyword id="KW-0808">Transferase</keyword>
<keyword id="KW-0819">tRNA processing</keyword>
<dbReference type="EC" id="2.5.1.75" evidence="1"/>
<dbReference type="EMBL" id="CP000774">
    <property type="protein sequence ID" value="ABS64072.1"/>
    <property type="molecule type" value="Genomic_DNA"/>
</dbReference>
<dbReference type="RefSeq" id="WP_012111383.1">
    <property type="nucleotide sequence ID" value="NC_009719.1"/>
</dbReference>
<dbReference type="SMR" id="A7HVY9"/>
<dbReference type="STRING" id="402881.Plav_2463"/>
<dbReference type="KEGG" id="pla:Plav_2463"/>
<dbReference type="eggNOG" id="COG0324">
    <property type="taxonomic scope" value="Bacteria"/>
</dbReference>
<dbReference type="HOGENOM" id="CLU_032616_0_1_5"/>
<dbReference type="OrthoDB" id="9776390at2"/>
<dbReference type="Proteomes" id="UP000006377">
    <property type="component" value="Chromosome"/>
</dbReference>
<dbReference type="GO" id="GO:0005524">
    <property type="term" value="F:ATP binding"/>
    <property type="evidence" value="ECO:0007669"/>
    <property type="project" value="UniProtKB-UniRule"/>
</dbReference>
<dbReference type="GO" id="GO:0052381">
    <property type="term" value="F:tRNA dimethylallyltransferase activity"/>
    <property type="evidence" value="ECO:0007669"/>
    <property type="project" value="UniProtKB-UniRule"/>
</dbReference>
<dbReference type="GO" id="GO:0006400">
    <property type="term" value="P:tRNA modification"/>
    <property type="evidence" value="ECO:0007669"/>
    <property type="project" value="TreeGrafter"/>
</dbReference>
<dbReference type="Gene3D" id="1.10.20.140">
    <property type="match status" value="1"/>
</dbReference>
<dbReference type="Gene3D" id="3.40.50.300">
    <property type="entry name" value="P-loop containing nucleotide triphosphate hydrolases"/>
    <property type="match status" value="1"/>
</dbReference>
<dbReference type="HAMAP" id="MF_00185">
    <property type="entry name" value="IPP_trans"/>
    <property type="match status" value="1"/>
</dbReference>
<dbReference type="InterPro" id="IPR039657">
    <property type="entry name" value="Dimethylallyltransferase"/>
</dbReference>
<dbReference type="InterPro" id="IPR018022">
    <property type="entry name" value="IPT"/>
</dbReference>
<dbReference type="InterPro" id="IPR027417">
    <property type="entry name" value="P-loop_NTPase"/>
</dbReference>
<dbReference type="NCBIfam" id="TIGR00174">
    <property type="entry name" value="miaA"/>
    <property type="match status" value="1"/>
</dbReference>
<dbReference type="PANTHER" id="PTHR11088">
    <property type="entry name" value="TRNA DIMETHYLALLYLTRANSFERASE"/>
    <property type="match status" value="1"/>
</dbReference>
<dbReference type="PANTHER" id="PTHR11088:SF60">
    <property type="entry name" value="TRNA DIMETHYLALLYLTRANSFERASE"/>
    <property type="match status" value="1"/>
</dbReference>
<dbReference type="Pfam" id="PF01715">
    <property type="entry name" value="IPPT"/>
    <property type="match status" value="1"/>
</dbReference>
<dbReference type="SUPFAM" id="SSF52540">
    <property type="entry name" value="P-loop containing nucleoside triphosphate hydrolases"/>
    <property type="match status" value="1"/>
</dbReference>
<protein>
    <recommendedName>
        <fullName evidence="1">tRNA dimethylallyltransferase</fullName>
        <ecNumber evidence="1">2.5.1.75</ecNumber>
    </recommendedName>
    <alternativeName>
        <fullName evidence="1">Dimethylallyl diphosphate:tRNA dimethylallyltransferase</fullName>
        <shortName evidence="1">DMAPP:tRNA dimethylallyltransferase</shortName>
        <shortName evidence="1">DMATase</shortName>
    </alternativeName>
    <alternativeName>
        <fullName evidence="1">Isopentenyl-diphosphate:tRNA isopentenyltransferase</fullName>
        <shortName evidence="1">IPP transferase</shortName>
        <shortName evidence="1">IPPT</shortName>
        <shortName evidence="1">IPTase</shortName>
    </alternativeName>
</protein>
<name>MIAA_PARL1</name>
<sequence length="314" mass="33507">MSEPVGRAVLIAGPTASGKSGLALALAEKLGGEIVNADSMQLYREMRVLTARPSEEEEARVPHHLYGVTAASAPLSAGRWAVLAAEKMREIAARGRLPVVVGGTGLYFRALIEGLAPIPAIPDDVRAAVRAEVGDAGPHAHALLAEADPALAATIRPSDLQRIARGIEVARATGRPLSAWQQIPPEPLVSGTFAKIMLMPDRAWLQARCDRRFDLMLEEGALEEAAAMTALGLDPALPAAKALGLRPLMRHLAGEITLEEAAAAGKAETRAYAKRQETWLRTQMIAWKGFSTQHSESLNAEILSFIDDLGLTRS</sequence>
<evidence type="ECO:0000255" key="1">
    <source>
        <dbReference type="HAMAP-Rule" id="MF_00185"/>
    </source>
</evidence>
<accession>A7HVY9</accession>
<feature type="chain" id="PRO_0000377253" description="tRNA dimethylallyltransferase">
    <location>
        <begin position="1"/>
        <end position="314"/>
    </location>
</feature>
<feature type="region of interest" description="Interaction with substrate tRNA" evidence="1">
    <location>
        <begin position="38"/>
        <end position="41"/>
    </location>
</feature>
<feature type="region of interest" description="Interaction with substrate tRNA" evidence="1">
    <location>
        <begin position="161"/>
        <end position="165"/>
    </location>
</feature>
<feature type="binding site" evidence="1">
    <location>
        <begin position="13"/>
        <end position="20"/>
    </location>
    <ligand>
        <name>ATP</name>
        <dbReference type="ChEBI" id="CHEBI:30616"/>
    </ligand>
</feature>
<feature type="binding site" evidence="1">
    <location>
        <begin position="15"/>
        <end position="20"/>
    </location>
    <ligand>
        <name>substrate</name>
    </ligand>
</feature>
<feature type="site" description="Interaction with substrate tRNA" evidence="1">
    <location>
        <position position="104"/>
    </location>
</feature>
<feature type="site" description="Interaction with substrate tRNA" evidence="1">
    <location>
        <position position="126"/>
    </location>
</feature>
<comment type="function">
    <text evidence="1">Catalyzes the transfer of a dimethylallyl group onto the adenine at position 37 in tRNAs that read codons beginning with uridine, leading to the formation of N6-(dimethylallyl)adenosine (i(6)A).</text>
</comment>
<comment type="catalytic activity">
    <reaction evidence="1">
        <text>adenosine(37) in tRNA + dimethylallyl diphosphate = N(6)-dimethylallyladenosine(37) in tRNA + diphosphate</text>
        <dbReference type="Rhea" id="RHEA:26482"/>
        <dbReference type="Rhea" id="RHEA-COMP:10162"/>
        <dbReference type="Rhea" id="RHEA-COMP:10375"/>
        <dbReference type="ChEBI" id="CHEBI:33019"/>
        <dbReference type="ChEBI" id="CHEBI:57623"/>
        <dbReference type="ChEBI" id="CHEBI:74411"/>
        <dbReference type="ChEBI" id="CHEBI:74415"/>
        <dbReference type="EC" id="2.5.1.75"/>
    </reaction>
</comment>
<comment type="cofactor">
    <cofactor evidence="1">
        <name>Mg(2+)</name>
        <dbReference type="ChEBI" id="CHEBI:18420"/>
    </cofactor>
</comment>
<comment type="subunit">
    <text evidence="1">Monomer.</text>
</comment>
<comment type="similarity">
    <text evidence="1">Belongs to the IPP transferase family.</text>
</comment>
<gene>
    <name evidence="1" type="primary">miaA</name>
    <name type="ordered locus">Plav_2463</name>
</gene>